<name>VANX_ENTFA</name>
<feature type="chain" id="PRO_0000217839" description="D-alanyl-D-alanine dipeptidase">
    <location>
        <begin position="1"/>
        <end position="202"/>
    </location>
</feature>
<feature type="active site" description="Proton donor/acceptor" evidence="1">
    <location>
        <position position="181"/>
    </location>
</feature>
<feature type="binding site" evidence="1">
    <location>
        <position position="116"/>
    </location>
    <ligand>
        <name>Zn(2+)</name>
        <dbReference type="ChEBI" id="CHEBI:29105"/>
        <note>catalytic</note>
    </ligand>
</feature>
<feature type="binding site" evidence="1">
    <location>
        <position position="123"/>
    </location>
    <ligand>
        <name>Zn(2+)</name>
        <dbReference type="ChEBI" id="CHEBI:29105"/>
        <note>catalytic</note>
    </ligand>
</feature>
<feature type="binding site" evidence="1">
    <location>
        <position position="184"/>
    </location>
    <ligand>
        <name>Zn(2+)</name>
        <dbReference type="ChEBI" id="CHEBI:29105"/>
        <note>catalytic</note>
    </ligand>
</feature>
<feature type="site" description="Transition state stabilizer" evidence="1">
    <location>
        <position position="71"/>
    </location>
</feature>
<feature type="sequence conflict" description="In Ref. 1; AAB05628." evidence="3" ref="1">
    <original>A</original>
    <variation>R</variation>
    <location>
        <position position="59"/>
    </location>
</feature>
<dbReference type="EC" id="3.4.13.22"/>
<dbReference type="EMBL" id="U35369">
    <property type="protein sequence ID" value="AAB05628.1"/>
    <property type="molecule type" value="Genomic_DNA"/>
</dbReference>
<dbReference type="EMBL" id="AE016830">
    <property type="protein sequence ID" value="AAO82020.1"/>
    <property type="molecule type" value="Genomic_DNA"/>
</dbReference>
<dbReference type="RefSeq" id="NP_815950.1">
    <property type="nucleotide sequence ID" value="NC_004668.1"/>
</dbReference>
<dbReference type="RefSeq" id="WP_002368685.1">
    <property type="nucleotide sequence ID" value="NZ_KE136528.1"/>
</dbReference>
<dbReference type="SMR" id="Q47749"/>
<dbReference type="STRING" id="226185.EF_2293"/>
<dbReference type="MEROPS" id="M15.011"/>
<dbReference type="EnsemblBacteria" id="AAO82020">
    <property type="protein sequence ID" value="AAO82020"/>
    <property type="gene ID" value="EF_2293"/>
</dbReference>
<dbReference type="KEGG" id="efa:EF2293"/>
<dbReference type="PATRIC" id="fig|226185.45.peg.1239"/>
<dbReference type="eggNOG" id="COG2173">
    <property type="taxonomic scope" value="Bacteria"/>
</dbReference>
<dbReference type="HOGENOM" id="CLU_060744_0_1_9"/>
<dbReference type="Proteomes" id="UP000001415">
    <property type="component" value="Chromosome"/>
</dbReference>
<dbReference type="GO" id="GO:0160237">
    <property type="term" value="F:D-Ala-D-Ala dipeptidase activity"/>
    <property type="evidence" value="ECO:0007669"/>
    <property type="project" value="UniProtKB-EC"/>
</dbReference>
<dbReference type="GO" id="GO:0008237">
    <property type="term" value="F:metallopeptidase activity"/>
    <property type="evidence" value="ECO:0007669"/>
    <property type="project" value="UniProtKB-KW"/>
</dbReference>
<dbReference type="GO" id="GO:0008270">
    <property type="term" value="F:zinc ion binding"/>
    <property type="evidence" value="ECO:0007669"/>
    <property type="project" value="UniProtKB-UniRule"/>
</dbReference>
<dbReference type="GO" id="GO:0071555">
    <property type="term" value="P:cell wall organization"/>
    <property type="evidence" value="ECO:0007669"/>
    <property type="project" value="UniProtKB-KW"/>
</dbReference>
<dbReference type="GO" id="GO:0006508">
    <property type="term" value="P:proteolysis"/>
    <property type="evidence" value="ECO:0007669"/>
    <property type="project" value="UniProtKB-KW"/>
</dbReference>
<dbReference type="GO" id="GO:0046677">
    <property type="term" value="P:response to antibiotic"/>
    <property type="evidence" value="ECO:0007669"/>
    <property type="project" value="UniProtKB-KW"/>
</dbReference>
<dbReference type="CDD" id="cd14817">
    <property type="entry name" value="D-Ala-D-Ala_dipeptidase_VanX"/>
    <property type="match status" value="1"/>
</dbReference>
<dbReference type="Gene3D" id="3.30.1380.10">
    <property type="match status" value="1"/>
</dbReference>
<dbReference type="HAMAP" id="MF_01924">
    <property type="entry name" value="A_A_dipeptidase"/>
    <property type="match status" value="1"/>
</dbReference>
<dbReference type="InterPro" id="IPR000755">
    <property type="entry name" value="A_A_dipeptidase"/>
</dbReference>
<dbReference type="InterPro" id="IPR009045">
    <property type="entry name" value="Hedgehog_sig/DD-Pept_Zn-bd_sf"/>
</dbReference>
<dbReference type="NCBIfam" id="NF033115">
    <property type="entry name" value="dipept_VanX"/>
    <property type="match status" value="1"/>
</dbReference>
<dbReference type="PANTHER" id="PTHR43126">
    <property type="entry name" value="D-ALANYL-D-ALANINE DIPEPTIDASE"/>
    <property type="match status" value="1"/>
</dbReference>
<dbReference type="PANTHER" id="PTHR43126:SF1">
    <property type="entry name" value="D-ALANYL-D-ALANINE DIPEPTIDASE"/>
    <property type="match status" value="1"/>
</dbReference>
<dbReference type="Pfam" id="PF01427">
    <property type="entry name" value="Peptidase_M15"/>
    <property type="match status" value="1"/>
</dbReference>
<dbReference type="PIRSF" id="PIRSF026671">
    <property type="entry name" value="AA_dipeptidase"/>
    <property type="match status" value="1"/>
</dbReference>
<dbReference type="SUPFAM" id="SSF55166">
    <property type="entry name" value="Hedgehog/DD-peptidase"/>
    <property type="match status" value="1"/>
</dbReference>
<keyword id="KW-0046">Antibiotic resistance</keyword>
<keyword id="KW-0961">Cell wall biogenesis/degradation</keyword>
<keyword id="KW-0224">Dipeptidase</keyword>
<keyword id="KW-0378">Hydrolase</keyword>
<keyword id="KW-0479">Metal-binding</keyword>
<keyword id="KW-0482">Metalloprotease</keyword>
<keyword id="KW-0645">Protease</keyword>
<keyword id="KW-1185">Reference proteome</keyword>
<keyword id="KW-0862">Zinc</keyword>
<evidence type="ECO:0000250" key="1"/>
<evidence type="ECO:0000269" key="2">
    <source>
    </source>
</evidence>
<evidence type="ECO:0000305" key="3"/>
<organism>
    <name type="scientific">Enterococcus faecalis (strain ATCC 700802 / V583)</name>
    <dbReference type="NCBI Taxonomy" id="226185"/>
    <lineage>
        <taxon>Bacteria</taxon>
        <taxon>Bacillati</taxon>
        <taxon>Bacillota</taxon>
        <taxon>Bacilli</taxon>
        <taxon>Lactobacillales</taxon>
        <taxon>Enterococcaceae</taxon>
        <taxon>Enterococcus</taxon>
    </lineage>
</organism>
<reference key="1">
    <citation type="journal article" date="1996" name="J. Bacteriol.">
        <title>Regulation of VanB-type vancomycin resistance gene expression by the VanS(B)-VanR(B) two-component regulatory system in Enterococcus faecalis V583.</title>
        <authorList>
            <person name="Evers S."/>
            <person name="Courvalin P."/>
        </authorList>
    </citation>
    <scope>NUCLEOTIDE SEQUENCE [GENOMIC DNA]</scope>
    <scope>INDUCTION</scope>
    <source>
        <strain>ATCC 700802 / V583</strain>
    </source>
</reference>
<reference key="2">
    <citation type="journal article" date="2003" name="Science">
        <title>Role of mobile DNA in the evolution of vancomycin-resistant Enterococcus faecalis.</title>
        <authorList>
            <person name="Paulsen I.T."/>
            <person name="Banerjei L."/>
            <person name="Myers G.S.A."/>
            <person name="Nelson K.E."/>
            <person name="Seshadri R."/>
            <person name="Read T.D."/>
            <person name="Fouts D.E."/>
            <person name="Eisen J.A."/>
            <person name="Gill S.R."/>
            <person name="Heidelberg J.F."/>
            <person name="Tettelin H."/>
            <person name="Dodson R.J."/>
            <person name="Umayam L.A."/>
            <person name="Brinkac L.M."/>
            <person name="Beanan M.J."/>
            <person name="Daugherty S.C."/>
            <person name="DeBoy R.T."/>
            <person name="Durkin S.A."/>
            <person name="Kolonay J.F."/>
            <person name="Madupu R."/>
            <person name="Nelson W.C."/>
            <person name="Vamathevan J.J."/>
            <person name="Tran B."/>
            <person name="Upton J."/>
            <person name="Hansen T."/>
            <person name="Shetty J."/>
            <person name="Khouri H.M."/>
            <person name="Utterback T.R."/>
            <person name="Radune D."/>
            <person name="Ketchum K.A."/>
            <person name="Dougherty B.A."/>
            <person name="Fraser C.M."/>
        </authorList>
    </citation>
    <scope>NUCLEOTIDE SEQUENCE [LARGE SCALE GENOMIC DNA]</scope>
    <source>
        <strain>ATCC 700802 / V583</strain>
    </source>
</reference>
<gene>
    <name type="primary">vanXB</name>
    <name type="synonym">vanX</name>
    <name type="ordered locus">EF_2293</name>
</gene>
<accession>Q47749</accession>
<protein>
    <recommendedName>
        <fullName>D-alanyl-D-alanine dipeptidase</fullName>
        <shortName>D-Ala-D-Ala dipeptidase</shortName>
        <ecNumber>3.4.13.22</ecNumber>
    </recommendedName>
    <alternativeName>
        <fullName>Vancomycin B-type resistance protein VanXB</fullName>
    </alternativeName>
</protein>
<comment type="function">
    <text evidence="1">Catalyzes hydrolysis of the D-alanyl-D-alanine dipeptide.</text>
</comment>
<comment type="catalytic activity">
    <reaction>
        <text>D-alanyl-D-alanine + H2O = 2 D-alanine</text>
        <dbReference type="Rhea" id="RHEA:20661"/>
        <dbReference type="ChEBI" id="CHEBI:15377"/>
        <dbReference type="ChEBI" id="CHEBI:57416"/>
        <dbReference type="ChEBI" id="CHEBI:57822"/>
        <dbReference type="EC" id="3.4.13.22"/>
    </reaction>
</comment>
<comment type="cofactor">
    <cofactor evidence="1">
        <name>Zn(2+)</name>
        <dbReference type="ChEBI" id="CHEBI:29105"/>
    </cofactor>
    <text evidence="1">Binds 1 zinc ion per subunit.</text>
</comment>
<comment type="induction">
    <text evidence="2">By vancomycin, mediated by VanS/VanR.</text>
</comment>
<comment type="similarity">
    <text evidence="3">Belongs to the peptidase M15D family.</text>
</comment>
<sequence>MENGFLFLDEMLHGVRWDAKYATWDNFTGKPVDGYEVNRIIGTKAVALALREAQIHAAALGYGLLLWDGYRPKSAVDCFLRWAAQPEDNLTKEKYYPNIERAELITKGYVASQSSHSRGSTIDLTLYHLDTGELVSMGSNFDFMDERSHHTAKGIGNAEAQNRRCLRKIMESSGFQSYRFEWWHYKLIDEPYPDTYFNFAVS</sequence>
<proteinExistence type="evidence at transcript level"/>